<keyword id="KW-0158">Chromosome</keyword>
<keyword id="KW-0539">Nucleus</keyword>
<keyword id="KW-1185">Reference proteome</keyword>
<keyword id="KW-0694">RNA-binding</keyword>
<sequence>MGKIKKIQRKGPPATKRPPKAARTESTDSALGLDAHSDLEKPATSSDDGFEEPTPKPKPSKKTTTLPEPVSIIAQKKNKFRTDDAKNVKPPTLEEMKELRDTRNLFHSNLFKLQVKEMLEELQLKTKYTEYIDNWMESFTVFTQRLKDGLVEKSQLEVPLNVDKKISGFIFSKPTKEPQLIGAASTGTLLGPKIVVDVALEMPKDCLHKDDYLNLIYDQKRALYLTYVTNQMRSDPAYSQDKFAFNYHGNNPLKPVLELTPAAKHVSKHLQLRLFITAPQSTFKPGRFVPWNNNIRPTYYNDEWDEEEALPSTQHYNASVLFDLTLAQNQALLDKAFKGRRNFQDGLLLLKVWLRQRELDRGFTGFGSHILASFIVYLNQQRILHQSSSSYQVARTVWNQLANTDWTNGITLAPASGQTEQLSTIAGYYDVCFMDVSGQLNLCANVPLGVYQRVRAEAKLAVDLLNDMKLNSFPYIFMQKCPLYTRVDNILKITNYSSIQQMLVLHSKPQMKYDFASYGYPQLLQILTELLQKGLKQRVQAILPIETVSSAWPVESKAPIIGQAIQLGLILDPEHAYEVLDKGPSSNDDPEGSAEFRKFWGEKSNLRRFQDGSITEAVVWGTTKDAPSKKRLIVRQIVMHLLEHHLQLDSKDIQYIAAELDLVYQLSPWFKVSKVKTKLELQQDTDAEALSPNVIRCYDDLARQLHALDDLPLEIVSISSISPVSRYCEPMPVLPQARMMADHIHASHIQRVIIQLGQSGKWPNELSALRALKTAFLIEIGEKLKAQCRLNWSITSEGLLVLKRGFCFLLELAHNKELALLKQEVTERGVTKYVDNPESRALEQRHYILPKVSGALHSLHQSHSAYGPTVLIAKRWLATQLLDDGIWPPMATELLVAHLYQQRNAPQAIAAPQTGFMRLLHLLAHSDWNGELFLLNFNSSWQEQQIGDLEHSFRSDRQSYPPLALATSYDQQHAGRLWTTGESPSLRILSHVSRLARHALEMIETSLQSKDLRFVRPAQLFRGSSEGYDLVIQLKSDLVPNALSYDLGSPFVSFDQPNYLLPRAGKDPLAAIVHQLRSAYSDYAAFFYNPHGGKELAIMWRPPAVFAPKAFKVTELQACTLCDKGKVQVVRETLVEDFKVLLKDFYLRISTPEELKREQREHQNPKRYFNAKPQDNESCSKSKKRKLAKAAKVQAPLKRKSLIKSRPLKSLS</sequence>
<gene>
    <name evidence="1" type="primary">Mat89Ba</name>
    <name type="ORF">GL22251</name>
</gene>
<protein>
    <recommendedName>
        <fullName evidence="3">Nucleolar protein 6</fullName>
    </recommendedName>
    <alternativeName>
        <fullName evidence="1">Maternal transcript 89Ba</fullName>
    </alternativeName>
</protein>
<evidence type="ECO:0000250" key="1">
    <source>
        <dbReference type="UniProtKB" id="Q8IH00"/>
    </source>
</evidence>
<evidence type="ECO:0000250" key="2">
    <source>
        <dbReference type="UniProtKB" id="Q8R5K4"/>
    </source>
</evidence>
<evidence type="ECO:0000250" key="3">
    <source>
        <dbReference type="UniProtKB" id="Q9H6R4"/>
    </source>
</evidence>
<evidence type="ECO:0000255" key="4"/>
<evidence type="ECO:0000256" key="5">
    <source>
        <dbReference type="SAM" id="MobiDB-lite"/>
    </source>
</evidence>
<evidence type="ECO:0000312" key="6">
    <source>
        <dbReference type="EMBL" id="EDW34421.1"/>
    </source>
</evidence>
<name>NOL6_DROPE</name>
<dbReference type="EMBL" id="CH479182">
    <property type="protein sequence ID" value="EDW34421.1"/>
    <property type="molecule type" value="Genomic_DNA"/>
</dbReference>
<dbReference type="SMR" id="B4GFN6"/>
<dbReference type="STRING" id="7234.B4GFN6"/>
<dbReference type="EnsemblMetazoa" id="FBtr0187866">
    <property type="protein sequence ID" value="FBpp0186358"/>
    <property type="gene ID" value="FBgn0159843"/>
</dbReference>
<dbReference type="EnsemblMetazoa" id="XM_002017285.2">
    <property type="protein sequence ID" value="XP_002017321.1"/>
    <property type="gene ID" value="LOC6591684"/>
</dbReference>
<dbReference type="GeneID" id="6591684"/>
<dbReference type="KEGG" id="dpe:6591684"/>
<dbReference type="CTD" id="41973"/>
<dbReference type="eggNOG" id="KOG2054">
    <property type="taxonomic scope" value="Eukaryota"/>
</dbReference>
<dbReference type="HOGENOM" id="CLU_003502_0_1_1"/>
<dbReference type="OMA" id="NPHGGKE"/>
<dbReference type="OrthoDB" id="10251401at2759"/>
<dbReference type="PhylomeDB" id="B4GFN6"/>
<dbReference type="Proteomes" id="UP000008744">
    <property type="component" value="Unassembled WGS sequence"/>
</dbReference>
<dbReference type="GO" id="GO:0000794">
    <property type="term" value="C:condensed nuclear chromosome"/>
    <property type="evidence" value="ECO:0000250"/>
    <property type="project" value="UniProtKB"/>
</dbReference>
<dbReference type="GO" id="GO:0032545">
    <property type="term" value="C:CURI complex"/>
    <property type="evidence" value="ECO:0007669"/>
    <property type="project" value="TreeGrafter"/>
</dbReference>
<dbReference type="GO" id="GO:0032040">
    <property type="term" value="C:small-subunit processome"/>
    <property type="evidence" value="ECO:0000250"/>
    <property type="project" value="UniProtKB"/>
</dbReference>
<dbReference type="GO" id="GO:0034456">
    <property type="term" value="C:UTP-C complex"/>
    <property type="evidence" value="ECO:0007669"/>
    <property type="project" value="TreeGrafter"/>
</dbReference>
<dbReference type="GO" id="GO:0003723">
    <property type="term" value="F:RNA binding"/>
    <property type="evidence" value="ECO:0007669"/>
    <property type="project" value="UniProtKB-KW"/>
</dbReference>
<dbReference type="GO" id="GO:0042274">
    <property type="term" value="P:ribosomal small subunit biogenesis"/>
    <property type="evidence" value="ECO:0000250"/>
    <property type="project" value="UniProtKB"/>
</dbReference>
<dbReference type="GO" id="GO:0006364">
    <property type="term" value="P:rRNA processing"/>
    <property type="evidence" value="ECO:0007669"/>
    <property type="project" value="TreeGrafter"/>
</dbReference>
<dbReference type="GO" id="GO:0006409">
    <property type="term" value="P:tRNA export from nucleus"/>
    <property type="evidence" value="ECO:0007669"/>
    <property type="project" value="TreeGrafter"/>
</dbReference>
<dbReference type="FunFam" id="1.10.1410.10:FF:000005">
    <property type="entry name" value="Nucleolar protein 6"/>
    <property type="match status" value="1"/>
</dbReference>
<dbReference type="FunFam" id="1.10.1410.10:FF:000006">
    <property type="entry name" value="Nucleolar protein 6"/>
    <property type="match status" value="1"/>
</dbReference>
<dbReference type="Gene3D" id="1.10.1410.10">
    <property type="match status" value="2"/>
</dbReference>
<dbReference type="Gene3D" id="3.30.70.3030">
    <property type="match status" value="1"/>
</dbReference>
<dbReference type="InterPro" id="IPR005554">
    <property type="entry name" value="NOL6/Upt22"/>
</dbReference>
<dbReference type="InterPro" id="IPR035082">
    <property type="entry name" value="Nrap_D1"/>
</dbReference>
<dbReference type="InterPro" id="IPR035367">
    <property type="entry name" value="Nrap_D2"/>
</dbReference>
<dbReference type="InterPro" id="IPR035368">
    <property type="entry name" value="Nrap_D3"/>
</dbReference>
<dbReference type="InterPro" id="IPR035369">
    <property type="entry name" value="Nrap_D4"/>
</dbReference>
<dbReference type="InterPro" id="IPR035370">
    <property type="entry name" value="Nrap_D5"/>
</dbReference>
<dbReference type="InterPro" id="IPR035371">
    <property type="entry name" value="Nrap_D6"/>
</dbReference>
<dbReference type="PANTHER" id="PTHR17972:SF0">
    <property type="entry name" value="NUCLEOLAR PROTEIN 6"/>
    <property type="match status" value="1"/>
</dbReference>
<dbReference type="PANTHER" id="PTHR17972">
    <property type="entry name" value="NUCLEOLAR RNA-ASSOCIATED PROTEIN"/>
    <property type="match status" value="1"/>
</dbReference>
<dbReference type="Pfam" id="PF03813">
    <property type="entry name" value="Nrap"/>
    <property type="match status" value="1"/>
</dbReference>
<dbReference type="Pfam" id="PF17403">
    <property type="entry name" value="Nrap_D2"/>
    <property type="match status" value="1"/>
</dbReference>
<dbReference type="Pfam" id="PF17404">
    <property type="entry name" value="Nrap_D3"/>
    <property type="match status" value="1"/>
</dbReference>
<dbReference type="Pfam" id="PF17405">
    <property type="entry name" value="Nrap_D4"/>
    <property type="match status" value="1"/>
</dbReference>
<dbReference type="Pfam" id="PF17406">
    <property type="entry name" value="Nrap_D5"/>
    <property type="match status" value="1"/>
</dbReference>
<dbReference type="Pfam" id="PF17407">
    <property type="entry name" value="Nrap_D6"/>
    <property type="match status" value="1"/>
</dbReference>
<accession>B4GFN6</accession>
<comment type="function">
    <text evidence="3">Part of the small subunit (SSU) processome, first precursor of the small eukaryotic ribosomal subunit. During the assembly of the SSU processome in the nucleolus, many ribosome biogenesis factors, an RNA chaperone and ribosomal proteins associate with the nascent pre-rRNA and work in concert to generate RNA folding, modifications, rearrangements and cleavage as well as targeted degradation of pre-ribosomal RNA by the RNA exosome.</text>
</comment>
<comment type="subunit">
    <text evidence="3">Part of the small subunit (SSU) processome, composed of more than 70 proteins and the RNA chaperone small nucleolar RNA (snoRNA) U3.</text>
</comment>
<comment type="subcellular location">
    <subcellularLocation>
        <location evidence="3">Nucleus</location>
        <location evidence="3">Nucleolus</location>
    </subcellularLocation>
    <subcellularLocation>
        <location evidence="2">Chromosome</location>
    </subcellularLocation>
    <text evidence="2">Localizes to condensed chromosomes in mitosis.</text>
</comment>
<comment type="similarity">
    <text evidence="4">Belongs to the NRAP family.</text>
</comment>
<organism>
    <name type="scientific">Drosophila persimilis</name>
    <name type="common">Fruit fly</name>
    <dbReference type="NCBI Taxonomy" id="7234"/>
    <lineage>
        <taxon>Eukaryota</taxon>
        <taxon>Metazoa</taxon>
        <taxon>Ecdysozoa</taxon>
        <taxon>Arthropoda</taxon>
        <taxon>Hexapoda</taxon>
        <taxon>Insecta</taxon>
        <taxon>Pterygota</taxon>
        <taxon>Neoptera</taxon>
        <taxon>Endopterygota</taxon>
        <taxon>Diptera</taxon>
        <taxon>Brachycera</taxon>
        <taxon>Muscomorpha</taxon>
        <taxon>Ephydroidea</taxon>
        <taxon>Drosophilidae</taxon>
        <taxon>Drosophila</taxon>
        <taxon>Sophophora</taxon>
    </lineage>
</organism>
<reference evidence="6" key="1">
    <citation type="journal article" date="2007" name="Nature">
        <title>Evolution of genes and genomes on the Drosophila phylogeny.</title>
        <authorList>
            <consortium name="Drosophila 12 genomes consortium"/>
        </authorList>
    </citation>
    <scope>NUCLEOTIDE SEQUENCE [LARGE SCALE GENOMIC DNA]</scope>
    <source>
        <strain>MSH-3 / Tucson 14011-0111.49</strain>
    </source>
</reference>
<proteinExistence type="inferred from homology"/>
<feature type="chain" id="PRO_0000383626" description="Nucleolar protein 6">
    <location>
        <begin position="1"/>
        <end position="1212"/>
    </location>
</feature>
<feature type="region of interest" description="Disordered" evidence="5">
    <location>
        <begin position="1"/>
        <end position="72"/>
    </location>
</feature>
<feature type="region of interest" description="Disordered" evidence="5">
    <location>
        <begin position="1156"/>
        <end position="1212"/>
    </location>
</feature>
<feature type="compositionally biased region" description="Basic residues" evidence="5">
    <location>
        <begin position="1197"/>
        <end position="1212"/>
    </location>
</feature>